<comment type="function">
    <text evidence="1">Participates in the translocation of lipoproteins from the inner membrane to the outer membrane. Only forms a complex with a lipoprotein if the residue after the N-terminal Cys is not an aspartate (The Asp acts as a targeting signal to indicate that the lipoprotein should stay in the inner membrane) (By similarity).</text>
</comment>
<comment type="subunit">
    <text evidence="1">Monomer.</text>
</comment>
<comment type="subcellular location">
    <subcellularLocation>
        <location evidence="1">Periplasm</location>
    </subcellularLocation>
</comment>
<comment type="similarity">
    <text evidence="3">Belongs to the LolA family.</text>
</comment>
<dbReference type="EMBL" id="AE003852">
    <property type="protein sequence ID" value="AAF94266.1"/>
    <property type="molecule type" value="Genomic_DNA"/>
</dbReference>
<dbReference type="PIR" id="F82241">
    <property type="entry name" value="F82241"/>
</dbReference>
<dbReference type="RefSeq" id="NP_230752.1">
    <property type="nucleotide sequence ID" value="NC_002505.1"/>
</dbReference>
<dbReference type="RefSeq" id="WP_001045827.1">
    <property type="nucleotide sequence ID" value="NZ_LT906614.1"/>
</dbReference>
<dbReference type="SMR" id="P57069"/>
<dbReference type="STRING" id="243277.VC_1107"/>
<dbReference type="DNASU" id="2614377"/>
<dbReference type="EnsemblBacteria" id="AAF94266">
    <property type="protein sequence ID" value="AAF94266"/>
    <property type="gene ID" value="VC_1107"/>
</dbReference>
<dbReference type="GeneID" id="88785458"/>
<dbReference type="KEGG" id="vch:VC_1107"/>
<dbReference type="PATRIC" id="fig|243277.26.peg.1057"/>
<dbReference type="eggNOG" id="COG2834">
    <property type="taxonomic scope" value="Bacteria"/>
</dbReference>
<dbReference type="HOGENOM" id="CLU_087560_1_1_6"/>
<dbReference type="Proteomes" id="UP000000584">
    <property type="component" value="Chromosome 1"/>
</dbReference>
<dbReference type="GO" id="GO:0030288">
    <property type="term" value="C:outer membrane-bounded periplasmic space"/>
    <property type="evidence" value="ECO:0000318"/>
    <property type="project" value="GO_Central"/>
</dbReference>
<dbReference type="GO" id="GO:0044874">
    <property type="term" value="P:lipoprotein localization to outer membrane"/>
    <property type="evidence" value="ECO:0000318"/>
    <property type="project" value="GO_Central"/>
</dbReference>
<dbReference type="GO" id="GO:0042953">
    <property type="term" value="P:lipoprotein transport"/>
    <property type="evidence" value="ECO:0000318"/>
    <property type="project" value="GO_Central"/>
</dbReference>
<dbReference type="CDD" id="cd16325">
    <property type="entry name" value="LolA"/>
    <property type="match status" value="1"/>
</dbReference>
<dbReference type="Gene3D" id="2.50.20.10">
    <property type="entry name" value="Lipoprotein localisation LolA/LolB/LppX"/>
    <property type="match status" value="1"/>
</dbReference>
<dbReference type="HAMAP" id="MF_00240">
    <property type="entry name" value="LolA"/>
    <property type="match status" value="1"/>
</dbReference>
<dbReference type="InterPro" id="IPR029046">
    <property type="entry name" value="LolA/LolB/LppX"/>
</dbReference>
<dbReference type="InterPro" id="IPR004564">
    <property type="entry name" value="OM_lipoprot_carrier_LolA-like"/>
</dbReference>
<dbReference type="InterPro" id="IPR018323">
    <property type="entry name" value="OM_lipoprot_carrier_LolA_Pbac"/>
</dbReference>
<dbReference type="NCBIfam" id="TIGR00547">
    <property type="entry name" value="lolA"/>
    <property type="match status" value="1"/>
</dbReference>
<dbReference type="PANTHER" id="PTHR35869">
    <property type="entry name" value="OUTER-MEMBRANE LIPOPROTEIN CARRIER PROTEIN"/>
    <property type="match status" value="1"/>
</dbReference>
<dbReference type="PANTHER" id="PTHR35869:SF1">
    <property type="entry name" value="OUTER-MEMBRANE LIPOPROTEIN CARRIER PROTEIN"/>
    <property type="match status" value="1"/>
</dbReference>
<dbReference type="Pfam" id="PF03548">
    <property type="entry name" value="LolA"/>
    <property type="match status" value="1"/>
</dbReference>
<dbReference type="SUPFAM" id="SSF89392">
    <property type="entry name" value="Prokaryotic lipoproteins and lipoprotein localization factors"/>
    <property type="match status" value="1"/>
</dbReference>
<feature type="signal peptide" evidence="2">
    <location>
        <begin position="1"/>
        <end position="16"/>
    </location>
</feature>
<feature type="chain" id="PRO_0000018278" description="Outer-membrane lipoprotein carrier protein">
    <location>
        <begin position="17"/>
        <end position="198"/>
    </location>
</feature>
<sequence>MNKWLALLFCSFSAIAAPKDTLSERLAMSEGFSATFNQQVLSPEGKVILTGNGKVDIARPSLFRWETETPDENLLVSDGTTLWHFDPFVEQVTLYRAEEALEQTPFVLLTRNKASDWDAYHVEEKGDVFTLTPTALDSNQGRFQITISEKGVVQGFKVIEQDGQQSEFTFSKVKQQKPNASVFNYKVPKGVEVDDQRN</sequence>
<name>LOLA_VIBCH</name>
<gene>
    <name type="primary">lolA</name>
    <name type="ordered locus">VC_1107</name>
</gene>
<protein>
    <recommendedName>
        <fullName>Outer-membrane lipoprotein carrier protein</fullName>
    </recommendedName>
</protein>
<proteinExistence type="inferred from homology"/>
<reference key="1">
    <citation type="journal article" date="2000" name="Nature">
        <title>DNA sequence of both chromosomes of the cholera pathogen Vibrio cholerae.</title>
        <authorList>
            <person name="Heidelberg J.F."/>
            <person name="Eisen J.A."/>
            <person name="Nelson W.C."/>
            <person name="Clayton R.A."/>
            <person name="Gwinn M.L."/>
            <person name="Dodson R.J."/>
            <person name="Haft D.H."/>
            <person name="Hickey E.K."/>
            <person name="Peterson J.D."/>
            <person name="Umayam L.A."/>
            <person name="Gill S.R."/>
            <person name="Nelson K.E."/>
            <person name="Read T.D."/>
            <person name="Tettelin H."/>
            <person name="Richardson D.L."/>
            <person name="Ermolaeva M.D."/>
            <person name="Vamathevan J.J."/>
            <person name="Bass S."/>
            <person name="Qin H."/>
            <person name="Dragoi I."/>
            <person name="Sellers P."/>
            <person name="McDonald L.A."/>
            <person name="Utterback T.R."/>
            <person name="Fleischmann R.D."/>
            <person name="Nierman W.C."/>
            <person name="White O."/>
            <person name="Salzberg S.L."/>
            <person name="Smith H.O."/>
            <person name="Colwell R.R."/>
            <person name="Mekalanos J.J."/>
            <person name="Venter J.C."/>
            <person name="Fraser C.M."/>
        </authorList>
    </citation>
    <scope>NUCLEOTIDE SEQUENCE [LARGE SCALE GENOMIC DNA]</scope>
    <source>
        <strain>ATCC 39315 / El Tor Inaba N16961</strain>
    </source>
</reference>
<keyword id="KW-0143">Chaperone</keyword>
<keyword id="KW-0574">Periplasm</keyword>
<keyword id="KW-0653">Protein transport</keyword>
<keyword id="KW-1185">Reference proteome</keyword>
<keyword id="KW-0732">Signal</keyword>
<keyword id="KW-0813">Transport</keyword>
<organism>
    <name type="scientific">Vibrio cholerae serotype O1 (strain ATCC 39315 / El Tor Inaba N16961)</name>
    <dbReference type="NCBI Taxonomy" id="243277"/>
    <lineage>
        <taxon>Bacteria</taxon>
        <taxon>Pseudomonadati</taxon>
        <taxon>Pseudomonadota</taxon>
        <taxon>Gammaproteobacteria</taxon>
        <taxon>Vibrionales</taxon>
        <taxon>Vibrionaceae</taxon>
        <taxon>Vibrio</taxon>
    </lineage>
</organism>
<accession>P57069</accession>
<evidence type="ECO:0000250" key="1"/>
<evidence type="ECO:0000255" key="2"/>
<evidence type="ECO:0000305" key="3"/>